<gene>
    <name evidence="4" type="primary">UGT76E1</name>
    <name evidence="5" type="ordered locus">Solyc10g085230.1.1</name>
</gene>
<organism>
    <name type="scientific">Solanum lycopersicum</name>
    <name type="common">Tomato</name>
    <name type="synonym">Lycopersicon esculentum</name>
    <dbReference type="NCBI Taxonomy" id="4081"/>
    <lineage>
        <taxon>Eukaryota</taxon>
        <taxon>Viridiplantae</taxon>
        <taxon>Streptophyta</taxon>
        <taxon>Embryophyta</taxon>
        <taxon>Tracheophyta</taxon>
        <taxon>Spermatophyta</taxon>
        <taxon>Magnoliopsida</taxon>
        <taxon>eudicotyledons</taxon>
        <taxon>Gunneridae</taxon>
        <taxon>Pentapetalae</taxon>
        <taxon>asterids</taxon>
        <taxon>lamiids</taxon>
        <taxon>Solanales</taxon>
        <taxon>Solanaceae</taxon>
        <taxon>Solanoideae</taxon>
        <taxon>Solaneae</taxon>
        <taxon>Solanum</taxon>
        <taxon>Solanum subgen. Lycopersicon</taxon>
    </lineage>
</organism>
<dbReference type="EC" id="2.4.1.263" evidence="3"/>
<dbReference type="EMBL" id="CM001073">
    <property type="status" value="NOT_ANNOTATED_CDS"/>
    <property type="molecule type" value="Genomic_DNA"/>
</dbReference>
<dbReference type="RefSeq" id="NP_001348276.1">
    <property type="nucleotide sequence ID" value="NM_001361347.1"/>
</dbReference>
<dbReference type="RefSeq" id="XP_004249656.1">
    <property type="nucleotide sequence ID" value="XM_004249608.2"/>
</dbReference>
<dbReference type="RefSeq" id="XP_019071658.1">
    <property type="nucleotide sequence ID" value="XM_019216113.1"/>
</dbReference>
<dbReference type="SMR" id="K4D3V7"/>
<dbReference type="STRING" id="4081.K4D3V7"/>
<dbReference type="PaxDb" id="4081-Solyc10g085230.1.1"/>
<dbReference type="GeneID" id="101246393"/>
<dbReference type="eggNOG" id="KOG1192">
    <property type="taxonomic scope" value="Eukaryota"/>
</dbReference>
<dbReference type="HOGENOM" id="CLU_001724_0_0_1"/>
<dbReference type="InParanoid" id="K4D3V7"/>
<dbReference type="OrthoDB" id="5835829at2759"/>
<dbReference type="PhylomeDB" id="K4D3V7"/>
<dbReference type="SABIO-RK" id="K4D3V7"/>
<dbReference type="Proteomes" id="UP000004994">
    <property type="component" value="Unplaced"/>
</dbReference>
<dbReference type="ExpressionAtlas" id="K4D3V7">
    <property type="expression patterns" value="baseline and differential"/>
</dbReference>
<dbReference type="GO" id="GO:0005737">
    <property type="term" value="C:cytoplasm"/>
    <property type="evidence" value="ECO:0000314"/>
    <property type="project" value="UniProtKB"/>
</dbReference>
<dbReference type="GO" id="GO:0005634">
    <property type="term" value="C:nucleus"/>
    <property type="evidence" value="ECO:0000314"/>
    <property type="project" value="UniProtKB"/>
</dbReference>
<dbReference type="GO" id="GO:0010294">
    <property type="term" value="F:abscisic acid glucosyltransferase activity"/>
    <property type="evidence" value="ECO:0000314"/>
    <property type="project" value="UniProtKB"/>
</dbReference>
<dbReference type="GO" id="GO:0080043">
    <property type="term" value="F:quercetin 3-O-glucosyltransferase activity"/>
    <property type="evidence" value="ECO:0000318"/>
    <property type="project" value="GO_Central"/>
</dbReference>
<dbReference type="GO" id="GO:0080044">
    <property type="term" value="F:quercetin 7-O-glucosyltransferase activity"/>
    <property type="evidence" value="ECO:0000318"/>
    <property type="project" value="GO_Central"/>
</dbReference>
<dbReference type="CDD" id="cd03784">
    <property type="entry name" value="GT1_Gtf-like"/>
    <property type="match status" value="1"/>
</dbReference>
<dbReference type="FunFam" id="3.40.50.2000:FF:000040">
    <property type="entry name" value="UDP-glycosyltransferase 76C1"/>
    <property type="match status" value="1"/>
</dbReference>
<dbReference type="FunFam" id="3.40.50.2000:FF:000120">
    <property type="entry name" value="UDP-glycosyltransferase 76C1"/>
    <property type="match status" value="1"/>
</dbReference>
<dbReference type="Gene3D" id="3.40.50.2000">
    <property type="entry name" value="Glycogen Phosphorylase B"/>
    <property type="match status" value="2"/>
</dbReference>
<dbReference type="InterPro" id="IPR002213">
    <property type="entry name" value="UDP_glucos_trans"/>
</dbReference>
<dbReference type="InterPro" id="IPR035595">
    <property type="entry name" value="UDP_glycos_trans_CS"/>
</dbReference>
<dbReference type="PANTHER" id="PTHR48045">
    <property type="entry name" value="UDP-GLYCOSYLTRANSFERASE 72B1"/>
    <property type="match status" value="1"/>
</dbReference>
<dbReference type="PANTHER" id="PTHR48045:SF31">
    <property type="entry name" value="UDP-GLYCOSYLTRANSFERASE 76B1-LIKE"/>
    <property type="match status" value="1"/>
</dbReference>
<dbReference type="Pfam" id="PF00201">
    <property type="entry name" value="UDPGT"/>
    <property type="match status" value="1"/>
</dbReference>
<dbReference type="SUPFAM" id="SSF53756">
    <property type="entry name" value="UDP-Glycosyltransferase/glycogen phosphorylase"/>
    <property type="match status" value="1"/>
</dbReference>
<dbReference type="PROSITE" id="PS00375">
    <property type="entry name" value="UDPGT"/>
    <property type="match status" value="1"/>
</dbReference>
<evidence type="ECO:0000250" key="1">
    <source>
        <dbReference type="UniProtKB" id="A0A0A1HA03"/>
    </source>
</evidence>
<evidence type="ECO:0000250" key="2">
    <source>
        <dbReference type="UniProtKB" id="P51094"/>
    </source>
</evidence>
<evidence type="ECO:0000269" key="3">
    <source>
    </source>
</evidence>
<evidence type="ECO:0000303" key="4">
    <source>
    </source>
</evidence>
<evidence type="ECO:0000305" key="5"/>
<name>U76E1_SOLLC</name>
<reference key="1">
    <citation type="journal article" date="2012" name="Nature">
        <title>The tomato genome sequence provides insights into fleshy fruit evolution.</title>
        <authorList>
            <consortium name="Tomato Genome Consortium"/>
        </authorList>
    </citation>
    <scope>NUCLEOTIDE SEQUENCE [LARGE SCALE GENOMIC DNA]</scope>
    <source>
        <strain>cv. Heinz 1706</strain>
    </source>
</reference>
<reference key="2">
    <citation type="journal article" date="2017" name="Plant J.">
        <title>Suppressing ABA uridine diphosphate glucosyltransferase (SlUGT75C1) alters fruit ripening and the stress response in tomato.</title>
        <authorList>
            <person name="Sun Y."/>
            <person name="Ji K."/>
            <person name="Liang B."/>
            <person name="Du Y."/>
            <person name="Jiang L."/>
            <person name="Wang J."/>
            <person name="Kai W."/>
            <person name="Zhang Y."/>
            <person name="Zhai X."/>
            <person name="Chen P."/>
            <person name="Wang H."/>
            <person name="Leng P."/>
        </authorList>
    </citation>
    <scope>FUNCTION</scope>
    <scope>CATALYTIC ACTIVITY</scope>
    <scope>BIOPHYSICOCHEMICAL PROPERTIES</scope>
    <scope>DEVELOPMENTAL STAGE</scope>
    <scope>TISSUE SPECIFICITY</scope>
    <scope>SUBCELLULAR LOCATION</scope>
    <source>
        <strain>cv. MicroTom</strain>
    </source>
</reference>
<keyword id="KW-0963">Cytoplasm</keyword>
<keyword id="KW-0328">Glycosyltransferase</keyword>
<keyword id="KW-0539">Nucleus</keyword>
<keyword id="KW-1185">Reference proteome</keyword>
<keyword id="KW-0808">Transferase</keyword>
<accession>K4D3V7</accession>
<proteinExistence type="evidence at protein level"/>
<protein>
    <recommendedName>
        <fullName evidence="4">UDP-glycosyltransferase 76E1</fullName>
        <shortName evidence="4">SlUGT76E1</shortName>
        <ecNumber evidence="3">2.4.1.263</ecNumber>
    </recommendedName>
</protein>
<comment type="function">
    <text evidence="3">Glucosyltransferase acting on abscisic acid (ABA) but not on auxin (IAA).</text>
</comment>
<comment type="catalytic activity">
    <reaction evidence="3">
        <text>2-cis-(+)-abscisate + UDP-alpha-D-glucose = beta-D-glucopyranosyl cis-(+)-abscisate + UDP</text>
        <dbReference type="Rhea" id="RHEA:31031"/>
        <dbReference type="ChEBI" id="CHEBI:22151"/>
        <dbReference type="ChEBI" id="CHEBI:37569"/>
        <dbReference type="ChEBI" id="CHEBI:58223"/>
        <dbReference type="ChEBI" id="CHEBI:58885"/>
        <dbReference type="EC" id="2.4.1.263"/>
    </reaction>
</comment>
<comment type="biophysicochemical properties">
    <kinetics>
        <KM evidence="3">3.2 mM for abscisic acid</KM>
        <Vmax evidence="3">0.007 umol/min/ug enzyme with abscisic acid as substrate (in the presence of UDP-glucose)</Vmax>
    </kinetics>
    <phDependence>
        <text evidence="3">Optimum pH is 3.87-7.</text>
    </phDependence>
    <temperatureDependence>
        <text evidence="3">Optimum temperature is 37 degrees Celsius.</text>
    </temperatureDependence>
</comment>
<comment type="subcellular location">
    <subcellularLocation>
        <location evidence="3">Cytoplasm</location>
    </subcellularLocation>
    <subcellularLocation>
        <location evidence="3">Nucleus</location>
    </subcellularLocation>
</comment>
<comment type="tissue specificity">
    <text evidence="3">Expressed in flowers and fruits.</text>
</comment>
<comment type="developmental stage">
    <text evidence="3">Highly expressed during fruit ripening and flower development.</text>
</comment>
<comment type="similarity">
    <text evidence="5">Belongs to the UDP-glycosyltransferase family.</text>
</comment>
<feature type="chain" id="PRO_0000445699" description="UDP-glycosyltransferase 76E1">
    <location>
        <begin position="1"/>
        <end position="475"/>
    </location>
</feature>
<feature type="active site" description="Proton acceptor" evidence="1">
    <location>
        <position position="19"/>
    </location>
</feature>
<feature type="active site" description="Charge relay" evidence="1">
    <location>
        <position position="109"/>
    </location>
</feature>
<feature type="binding site" evidence="2">
    <location>
        <position position="19"/>
    </location>
    <ligand>
        <name>an anthocyanidin</name>
        <dbReference type="ChEBI" id="CHEBI:143576"/>
    </ligand>
</feature>
<feature type="binding site" evidence="1">
    <location>
        <position position="131"/>
    </location>
    <ligand>
        <name>UDP-alpha-D-glucose</name>
        <dbReference type="ChEBI" id="CHEBI:58885"/>
    </ligand>
</feature>
<feature type="binding site" evidence="1">
    <location>
        <position position="329"/>
    </location>
    <ligand>
        <name>UDP-alpha-D-glucose</name>
        <dbReference type="ChEBI" id="CHEBI:58885"/>
    </ligand>
</feature>
<feature type="binding site" evidence="1">
    <location>
        <position position="331"/>
    </location>
    <ligand>
        <name>UDP-alpha-D-glucose</name>
        <dbReference type="ChEBI" id="CHEBI:58885"/>
    </ligand>
</feature>
<feature type="binding site" evidence="1">
    <location>
        <position position="346"/>
    </location>
    <ligand>
        <name>UDP-alpha-D-glucose</name>
        <dbReference type="ChEBI" id="CHEBI:58885"/>
    </ligand>
</feature>
<feature type="binding site" evidence="1">
    <location>
        <position position="349"/>
    </location>
    <ligand>
        <name>UDP-alpha-D-glucose</name>
        <dbReference type="ChEBI" id="CHEBI:58885"/>
    </ligand>
</feature>
<feature type="binding site" evidence="1">
    <location>
        <position position="350"/>
    </location>
    <ligand>
        <name>UDP-alpha-D-glucose</name>
        <dbReference type="ChEBI" id="CHEBI:58885"/>
    </ligand>
</feature>
<feature type="binding site" evidence="1">
    <location>
        <position position="351"/>
    </location>
    <ligand>
        <name>UDP-alpha-D-glucose</name>
        <dbReference type="ChEBI" id="CHEBI:58885"/>
    </ligand>
</feature>
<feature type="binding site" evidence="1">
    <location>
        <position position="354"/>
    </location>
    <ligand>
        <name>UDP-alpha-D-glucose</name>
        <dbReference type="ChEBI" id="CHEBI:58885"/>
    </ligand>
</feature>
<feature type="binding site" evidence="2">
    <location>
        <position position="369"/>
    </location>
    <ligand>
        <name>an anthocyanidin</name>
        <dbReference type="ChEBI" id="CHEBI:143576"/>
    </ligand>
</feature>
<feature type="binding site" evidence="1">
    <location>
        <position position="370"/>
    </location>
    <ligand>
        <name>UDP-alpha-D-glucose</name>
        <dbReference type="ChEBI" id="CHEBI:58885"/>
    </ligand>
</feature>
<feature type="binding site" evidence="1">
    <location>
        <position position="371"/>
    </location>
    <ligand>
        <name>UDP-alpha-D-glucose</name>
        <dbReference type="ChEBI" id="CHEBI:58885"/>
    </ligand>
</feature>
<sequence length="475" mass="53527">MKIERKQSVVLVPHPYQGHLTPMLQLGSILHSQGFSVIVAHTQYNTPNYSNHPQFVFHSMDDGLQGIDMSFPSLENIYDMNENCKAPLRNYLVSMMEEEGDQLACIVYDNVMFFVDDVATQLKLPSIVLRTFSAAYLHSMITILQQPEIYLPFEDSQLLDPLPELHPLRFKDVPFPIINNTVPEPILDFCRAMSDIGSSVATIWNTMQDLESSMLLRLQEHYKVPFFPIGPVHKMASLVSSTSILEEDNSCIEWLDRQAPNSVLYVSLGSLVRIDHKELIETAWGLANSDQPFLWVIRPGSVSGFQCAEALPDGFEKMVGERGRIVKWAPQKQVLAHPAVAGFFTHCGWNSTLESICEEVPMVCRPFLADQLVNARYLSQIYKVGFELEVIERTVIEKTIRKLMLSEEGKDVKKRVADMKQKIVAGMQIDCTSHKNLNDLVDFISALPSRLAPPTPVFGAIMSSNHIASKCIIES</sequence>